<comment type="function">
    <text evidence="5 9">Phosphorylates the second messenger diacylglycerol (DAG) to generate phosphatidic acid (PA), another important signaling molecule (PubMed:30887532). PA is required for plant development and responses to abiotic stress (Probable). May play a role in disease resistance responses to pathogen attack (Probable). Modulates root architecture by regulating the ratio of DAG and PA, which have opposite effect on the promotion or suppression of lateral roots vs seminal roots (PubMed:30887532). Suppresses lateral root number, but promotes seminal root and crown root thickness (PubMed:30887532).</text>
</comment>
<comment type="catalytic activity">
    <reaction evidence="5">
        <text>a 1,2-diacyl-sn-glycerol + ATP = a 1,2-diacyl-sn-glycero-3-phosphate + ADP + H(+)</text>
        <dbReference type="Rhea" id="RHEA:10272"/>
        <dbReference type="ChEBI" id="CHEBI:15378"/>
        <dbReference type="ChEBI" id="CHEBI:17815"/>
        <dbReference type="ChEBI" id="CHEBI:30616"/>
        <dbReference type="ChEBI" id="CHEBI:58608"/>
        <dbReference type="ChEBI" id="CHEBI:456216"/>
        <dbReference type="EC" id="2.7.1.107"/>
    </reaction>
    <physiologicalReaction direction="left-to-right" evidence="5">
        <dbReference type="Rhea" id="RHEA:10273"/>
    </physiologicalReaction>
</comment>
<comment type="subunit">
    <text evidence="1">Monomer.</text>
</comment>
<comment type="tissue specificity">
    <text evidence="5">Highly expressed in roots.</text>
</comment>
<comment type="induction">
    <text evidence="4">Induced by infection with the rice blast fungus Magnaporthe oryzae, and the inducer of plant defense responses benzothiadiazole (BTH).</text>
</comment>
<comment type="disruption phenotype">
    <text evidence="5">Increased number and density of lateral roots and decreased thickness of seminal roots.</text>
</comment>
<comment type="miscellaneous">
    <text evidence="5">Plants overexpressing DGK1 exhibit decreased density of lateral roots and increased thickness of seminal roots.</text>
</comment>
<comment type="similarity">
    <text evidence="8">Belongs to the eukaryotic diacylglycerol kinase family.</text>
</comment>
<organism>
    <name type="scientific">Oryza sativa subsp. japonica</name>
    <name type="common">Rice</name>
    <dbReference type="NCBI Taxonomy" id="39947"/>
    <lineage>
        <taxon>Eukaryota</taxon>
        <taxon>Viridiplantae</taxon>
        <taxon>Streptophyta</taxon>
        <taxon>Embryophyta</taxon>
        <taxon>Tracheophyta</taxon>
        <taxon>Spermatophyta</taxon>
        <taxon>Magnoliopsida</taxon>
        <taxon>Liliopsida</taxon>
        <taxon>Poales</taxon>
        <taxon>Poaceae</taxon>
        <taxon>BOP clade</taxon>
        <taxon>Oryzoideae</taxon>
        <taxon>Oryzeae</taxon>
        <taxon>Oryzinae</taxon>
        <taxon>Oryza</taxon>
        <taxon>Oryza sativa</taxon>
    </lineage>
</organism>
<keyword id="KW-0067">ATP-binding</keyword>
<keyword id="KW-0418">Kinase</keyword>
<keyword id="KW-0547">Nucleotide-binding</keyword>
<keyword id="KW-0611">Plant defense</keyword>
<keyword id="KW-1185">Reference proteome</keyword>
<keyword id="KW-0346">Stress response</keyword>
<keyword id="KW-0808">Transferase</keyword>
<proteinExistence type="evidence at protein level"/>
<evidence type="ECO:0000250" key="1">
    <source>
        <dbReference type="UniProtKB" id="P23743"/>
    </source>
</evidence>
<evidence type="ECO:0000255" key="2">
    <source>
        <dbReference type="PROSITE-ProRule" id="PRU00783"/>
    </source>
</evidence>
<evidence type="ECO:0000256" key="3">
    <source>
        <dbReference type="SAM" id="MobiDB-lite"/>
    </source>
</evidence>
<evidence type="ECO:0000269" key="4">
    <source>
    </source>
</evidence>
<evidence type="ECO:0000269" key="5">
    <source>
    </source>
</evidence>
<evidence type="ECO:0000303" key="6">
    <source>
    </source>
</evidence>
<evidence type="ECO:0000303" key="7">
    <source>
    </source>
</evidence>
<evidence type="ECO:0000305" key="8"/>
<evidence type="ECO:0000305" key="9">
    <source>
    </source>
</evidence>
<evidence type="ECO:0000312" key="10">
    <source>
        <dbReference type="EMBL" id="BAS91203.1"/>
    </source>
</evidence>
<sequence>MDGHTNGTNGSCSKPCEPLTDYCIPDYILNPDSEQVLVDQAPCCPVVVFINSRSGGQLGSSLIKTYRELLNKAQVFDLSEEAPEKVLHRLYCNFEKLKSNGDPIAFQIQSNLRLIVAGGDGTASWLLGVVSDLKLSHPPPIATVPLGTGNNLPFSFGWGKKNPTTDQEAVKSFLGQVKKAREMNIDSWHIIMRMRAPQEGPCEPIAPLELPHSLHAFHRVSGSDSLNMEGYHTYRGGFWNYFSMGMDAQVSYEFHSERKRNPEKFKNQLTNQSTYAKLGLKQGWFAASLTHPSSRNIAQLAKVRIMKRPGGQWEELKIPRSIRSIVCLNLPSFSGGLNPWGTPGTRKVQDRDLTAPFVDDGLIEVVGFRDAWHGLVLLAPNGHGTRLAQAHRIRFEFHKGAAEHTFMRIDGEPWKQPLPKDDDTVVVEISHLRQVTMLASDPCKSKSVNDPSSPMCCSNHDDDERNSLEDEDEWEEGRKKFGAADTFKFPDEVDVAHLS</sequence>
<reference key="1">
    <citation type="journal article" date="2002" name="Nature">
        <title>Sequence and analysis of rice chromosome 4.</title>
        <authorList>
            <person name="Feng Q."/>
            <person name="Zhang Y."/>
            <person name="Hao P."/>
            <person name="Wang S."/>
            <person name="Fu G."/>
            <person name="Huang Y."/>
            <person name="Li Y."/>
            <person name="Zhu J."/>
            <person name="Liu Y."/>
            <person name="Hu X."/>
            <person name="Jia P."/>
            <person name="Zhang Y."/>
            <person name="Zhao Q."/>
            <person name="Ying K."/>
            <person name="Yu S."/>
            <person name="Tang Y."/>
            <person name="Weng Q."/>
            <person name="Zhang L."/>
            <person name="Lu Y."/>
            <person name="Mu J."/>
            <person name="Lu Y."/>
            <person name="Zhang L.S."/>
            <person name="Yu Z."/>
            <person name="Fan D."/>
            <person name="Liu X."/>
            <person name="Lu T."/>
            <person name="Li C."/>
            <person name="Wu Y."/>
            <person name="Sun T."/>
            <person name="Lei H."/>
            <person name="Li T."/>
            <person name="Hu H."/>
            <person name="Guan J."/>
            <person name="Wu M."/>
            <person name="Zhang R."/>
            <person name="Zhou B."/>
            <person name="Chen Z."/>
            <person name="Chen L."/>
            <person name="Jin Z."/>
            <person name="Wang R."/>
            <person name="Yin H."/>
            <person name="Cai Z."/>
            <person name="Ren S."/>
            <person name="Lv G."/>
            <person name="Gu W."/>
            <person name="Zhu G."/>
            <person name="Tu Y."/>
            <person name="Jia J."/>
            <person name="Zhang Y."/>
            <person name="Chen J."/>
            <person name="Kang H."/>
            <person name="Chen X."/>
            <person name="Shao C."/>
            <person name="Sun Y."/>
            <person name="Hu Q."/>
            <person name="Zhang X."/>
            <person name="Zhang W."/>
            <person name="Wang L."/>
            <person name="Ding C."/>
            <person name="Sheng H."/>
            <person name="Gu J."/>
            <person name="Chen S."/>
            <person name="Ni L."/>
            <person name="Zhu F."/>
            <person name="Chen W."/>
            <person name="Lan L."/>
            <person name="Lai Y."/>
            <person name="Cheng Z."/>
            <person name="Gu M."/>
            <person name="Jiang J."/>
            <person name="Li J."/>
            <person name="Hong G."/>
            <person name="Xue Y."/>
            <person name="Han B."/>
        </authorList>
    </citation>
    <scope>NUCLEOTIDE SEQUENCE [LARGE SCALE GENOMIC DNA]</scope>
    <source>
        <strain>cv. Nipponbare</strain>
    </source>
</reference>
<reference key="2">
    <citation type="journal article" date="2005" name="Nature">
        <title>The map-based sequence of the rice genome.</title>
        <authorList>
            <consortium name="International rice genome sequencing project (IRGSP)"/>
        </authorList>
    </citation>
    <scope>NUCLEOTIDE SEQUENCE [LARGE SCALE GENOMIC DNA]</scope>
    <source>
        <strain>cv. Nipponbare</strain>
    </source>
</reference>
<reference key="3">
    <citation type="journal article" date="2008" name="Nucleic Acids Res.">
        <title>The rice annotation project database (RAP-DB): 2008 update.</title>
        <authorList>
            <consortium name="The rice annotation project (RAP)"/>
        </authorList>
    </citation>
    <scope>GENOME REANNOTATION</scope>
    <source>
        <strain>cv. Nipponbare</strain>
    </source>
</reference>
<reference key="4">
    <citation type="journal article" date="2013" name="Rice">
        <title>Improvement of the Oryza sativa Nipponbare reference genome using next generation sequence and optical map data.</title>
        <authorList>
            <person name="Kawahara Y."/>
            <person name="de la Bastide M."/>
            <person name="Hamilton J.P."/>
            <person name="Kanamori H."/>
            <person name="McCombie W.R."/>
            <person name="Ouyang S."/>
            <person name="Schwartz D.C."/>
            <person name="Tanaka T."/>
            <person name="Wu J."/>
            <person name="Zhou S."/>
            <person name="Childs K.L."/>
            <person name="Davidson R.M."/>
            <person name="Lin H."/>
            <person name="Quesada-Ocampo L."/>
            <person name="Vaillancourt B."/>
            <person name="Sakai H."/>
            <person name="Lee S.S."/>
            <person name="Kim J."/>
            <person name="Numa H."/>
            <person name="Itoh T."/>
            <person name="Buell C.R."/>
            <person name="Matsumoto T."/>
        </authorList>
    </citation>
    <scope>GENOME REANNOTATION</scope>
    <source>
        <strain>cv. Nipponbare</strain>
    </source>
</reference>
<reference key="5">
    <citation type="journal article" date="2003" name="Science">
        <title>Collection, mapping, and annotation of over 28,000 cDNA clones from japonica rice.</title>
        <authorList>
            <consortium name="The rice full-length cDNA consortium"/>
        </authorList>
    </citation>
    <scope>NUCLEOTIDE SEQUENCE [LARGE SCALE MRNA]</scope>
    <source>
        <strain>cv. Nipponbare</strain>
    </source>
</reference>
<reference key="6">
    <citation type="journal article" date="2008" name="Mol. Cells">
        <title>Overexpression of a rice diacylglycerol kinase gene OsBIDK1 enhances disease resistance in transgenic tobacco.</title>
        <authorList>
            <person name="Zhang W."/>
            <person name="Chen J."/>
            <person name="Zhang H."/>
            <person name="Song F."/>
        </authorList>
    </citation>
    <scope>FUNCTION</scope>
    <scope>INDUCTION</scope>
</reference>
<reference key="7">
    <citation type="journal article" date="2019" name="New Phytol.">
        <title>Diacylglycerol kinase and associated lipid mediators modulate rice root architecture.</title>
        <authorList>
            <person name="Yuan S."/>
            <person name="Kim S.C."/>
            <person name="Deng X."/>
            <person name="Hong Y."/>
            <person name="Wang X."/>
        </authorList>
    </citation>
    <scope>FUNCTION</scope>
    <scope>CATALYTIC ACTIVITY</scope>
    <scope>TISSUE SPECIFICITY</scope>
    <scope>DISRUPTION PHENOTYPE</scope>
</reference>
<gene>
    <name evidence="7" type="primary">DGK1</name>
    <name evidence="6" type="synonym">BIDK1</name>
    <name evidence="10" type="ordered locus">Os04g0634700</name>
    <name evidence="8" type="ordered locus">LOC_Os04g54200</name>
    <name evidence="10" type="ORF">OSJNBa0043L09.15</name>
</gene>
<dbReference type="EC" id="2.7.1.107" evidence="5"/>
<dbReference type="EMBL" id="AL606444">
    <property type="protein sequence ID" value="CAE02996.2"/>
    <property type="molecule type" value="Genomic_DNA"/>
</dbReference>
<dbReference type="EMBL" id="AP008210">
    <property type="protein sequence ID" value="BAF15915.1"/>
    <property type="molecule type" value="Genomic_DNA"/>
</dbReference>
<dbReference type="EMBL" id="AP014960">
    <property type="protein sequence ID" value="BAS91203.1"/>
    <property type="molecule type" value="Genomic_DNA"/>
</dbReference>
<dbReference type="EMBL" id="AK100906">
    <property type="protein sequence ID" value="BAG94821.1"/>
    <property type="molecule type" value="mRNA"/>
</dbReference>
<dbReference type="FunCoup" id="Q7XQT2">
    <property type="interactions" value="145"/>
</dbReference>
<dbReference type="STRING" id="39947.Q7XQT2"/>
<dbReference type="PaxDb" id="39947-Q7XQT2"/>
<dbReference type="EnsemblPlants" id="Os04t0634700-01">
    <property type="protein sequence ID" value="Os04t0634700-01"/>
    <property type="gene ID" value="Os04g0634700"/>
</dbReference>
<dbReference type="Gramene" id="Os04t0634700-01">
    <property type="protein sequence ID" value="Os04t0634700-01"/>
    <property type="gene ID" value="Os04g0634700"/>
</dbReference>
<dbReference type="KEGG" id="dosa:Os04g0634700"/>
<dbReference type="KEGG" id="osa:4337126"/>
<dbReference type="eggNOG" id="KOG1169">
    <property type="taxonomic scope" value="Eukaryota"/>
</dbReference>
<dbReference type="HOGENOM" id="CLU_002706_46_2_1"/>
<dbReference type="InParanoid" id="Q7XQT2"/>
<dbReference type="OMA" id="CRSNHDD"/>
<dbReference type="OrthoDB" id="242257at2759"/>
<dbReference type="BRENDA" id="2.7.1.107">
    <property type="organism ID" value="8948"/>
</dbReference>
<dbReference type="Proteomes" id="UP000000763">
    <property type="component" value="Chromosome 4"/>
</dbReference>
<dbReference type="Proteomes" id="UP000059680">
    <property type="component" value="Chromosome 4"/>
</dbReference>
<dbReference type="GO" id="GO:0016020">
    <property type="term" value="C:membrane"/>
    <property type="evidence" value="ECO:0000318"/>
    <property type="project" value="GO_Central"/>
</dbReference>
<dbReference type="GO" id="GO:0005524">
    <property type="term" value="F:ATP binding"/>
    <property type="evidence" value="ECO:0007669"/>
    <property type="project" value="UniProtKB-KW"/>
</dbReference>
<dbReference type="GO" id="GO:0004143">
    <property type="term" value="F:ATP-dependent diacylglycerol kinase activity"/>
    <property type="evidence" value="ECO:0000318"/>
    <property type="project" value="GO_Central"/>
</dbReference>
<dbReference type="GO" id="GO:0006952">
    <property type="term" value="P:defense response"/>
    <property type="evidence" value="ECO:0007669"/>
    <property type="project" value="UniProtKB-KW"/>
</dbReference>
<dbReference type="GO" id="GO:0046486">
    <property type="term" value="P:glycerolipid metabolic process"/>
    <property type="evidence" value="ECO:0000318"/>
    <property type="project" value="GO_Central"/>
</dbReference>
<dbReference type="GO" id="GO:0035556">
    <property type="term" value="P:intracellular signal transduction"/>
    <property type="evidence" value="ECO:0000318"/>
    <property type="project" value="GO_Central"/>
</dbReference>
<dbReference type="GO" id="GO:0007200">
    <property type="term" value="P:phospholipase C-activating G protein-coupled receptor signaling pathway"/>
    <property type="evidence" value="ECO:0007669"/>
    <property type="project" value="InterPro"/>
</dbReference>
<dbReference type="FunFam" id="3.40.50.10330:FF:000016">
    <property type="entry name" value="Diacylglycerol kinase"/>
    <property type="match status" value="1"/>
</dbReference>
<dbReference type="FunFam" id="2.60.200.40:FF:000007">
    <property type="entry name" value="diacylglycerol kinase"/>
    <property type="match status" value="1"/>
</dbReference>
<dbReference type="Gene3D" id="2.60.200.40">
    <property type="match status" value="1"/>
</dbReference>
<dbReference type="Gene3D" id="3.40.50.10330">
    <property type="entry name" value="Probable inorganic polyphosphate/atp-NAD kinase, domain 1"/>
    <property type="match status" value="1"/>
</dbReference>
<dbReference type="InterPro" id="IPR017438">
    <property type="entry name" value="ATP-NAD_kinase_N"/>
</dbReference>
<dbReference type="InterPro" id="IPR037607">
    <property type="entry name" value="DGK"/>
</dbReference>
<dbReference type="InterPro" id="IPR000756">
    <property type="entry name" value="Diacylglycerol_kin_accessory"/>
</dbReference>
<dbReference type="InterPro" id="IPR001206">
    <property type="entry name" value="Diacylglycerol_kinase_cat_dom"/>
</dbReference>
<dbReference type="InterPro" id="IPR016961">
    <property type="entry name" value="Diacylglycerol_kinase_pln"/>
</dbReference>
<dbReference type="InterPro" id="IPR016064">
    <property type="entry name" value="NAD/diacylglycerol_kinase_sf"/>
</dbReference>
<dbReference type="PANTHER" id="PTHR11255">
    <property type="entry name" value="DIACYLGLYCEROL KINASE"/>
    <property type="match status" value="1"/>
</dbReference>
<dbReference type="PANTHER" id="PTHR11255:SF98">
    <property type="entry name" value="DIACYLGLYCEROL KINASE 5"/>
    <property type="match status" value="1"/>
</dbReference>
<dbReference type="Pfam" id="PF00609">
    <property type="entry name" value="DAGK_acc"/>
    <property type="match status" value="1"/>
</dbReference>
<dbReference type="Pfam" id="PF00781">
    <property type="entry name" value="DAGK_cat"/>
    <property type="match status" value="1"/>
</dbReference>
<dbReference type="PIRSF" id="PIRSF030829">
    <property type="entry name" value="Diacylglycerol_kinase_pln"/>
    <property type="match status" value="1"/>
</dbReference>
<dbReference type="SMART" id="SM00045">
    <property type="entry name" value="DAGKa"/>
    <property type="match status" value="1"/>
</dbReference>
<dbReference type="SMART" id="SM00046">
    <property type="entry name" value="DAGKc"/>
    <property type="match status" value="1"/>
</dbReference>
<dbReference type="SUPFAM" id="SSF111331">
    <property type="entry name" value="NAD kinase/diacylglycerol kinase-like"/>
    <property type="match status" value="1"/>
</dbReference>
<dbReference type="PROSITE" id="PS50146">
    <property type="entry name" value="DAGK"/>
    <property type="match status" value="1"/>
</dbReference>
<name>DGK1_ORYSJ</name>
<protein>
    <recommendedName>
        <fullName evidence="7">Diacylglycerol kinase 1</fullName>
        <shortName evidence="8">DAG kinase 1</shortName>
        <shortName evidence="7">OsDGK1</shortName>
        <ecNumber evidence="5">2.7.1.107</ecNumber>
    </recommendedName>
    <alternativeName>
        <fullName evidence="6">BTH-inducible diacylglycerol kinase 1</fullName>
        <shortName evidence="6">OsBIDK1</shortName>
    </alternativeName>
</protein>
<feature type="chain" id="PRO_0000451305" description="Diacylglycerol kinase 1">
    <location>
        <begin position="1"/>
        <end position="499"/>
    </location>
</feature>
<feature type="domain" description="DAGKc" evidence="2">
    <location>
        <begin position="41"/>
        <end position="194"/>
    </location>
</feature>
<feature type="region of interest" description="Disordered" evidence="3">
    <location>
        <begin position="442"/>
        <end position="479"/>
    </location>
</feature>
<feature type="compositionally biased region" description="Polar residues" evidence="3">
    <location>
        <begin position="446"/>
        <end position="456"/>
    </location>
</feature>
<feature type="compositionally biased region" description="Basic and acidic residues" evidence="3">
    <location>
        <begin position="459"/>
        <end position="468"/>
    </location>
</feature>
<accession>Q7XQT2</accession>
<accession>A0A0P0WF54</accession>